<organism>
    <name type="scientific">Mus musculus</name>
    <name type="common">Mouse</name>
    <dbReference type="NCBI Taxonomy" id="10090"/>
    <lineage>
        <taxon>Eukaryota</taxon>
        <taxon>Metazoa</taxon>
        <taxon>Chordata</taxon>
        <taxon>Craniata</taxon>
        <taxon>Vertebrata</taxon>
        <taxon>Euteleostomi</taxon>
        <taxon>Mammalia</taxon>
        <taxon>Eutheria</taxon>
        <taxon>Euarchontoglires</taxon>
        <taxon>Glires</taxon>
        <taxon>Rodentia</taxon>
        <taxon>Myomorpha</taxon>
        <taxon>Muroidea</taxon>
        <taxon>Muridae</taxon>
        <taxon>Murinae</taxon>
        <taxon>Mus</taxon>
        <taxon>Mus</taxon>
    </lineage>
</organism>
<gene>
    <name type="primary">Parvb</name>
</gene>
<comment type="function">
    <text evidence="1">Adapter protein that plays a role in integrin signaling via ILK and in activation of the GTPases CDC42 and RAC1 by guanine exchange factors, such as ARHGEF6. Is involved in the reorganization of the actin cytoskeleton and formation of lamellipodia. Plays a role in cell adhesion, cell spreading, establishment or maintenance of cell polarity, and cell migration (By similarity).</text>
</comment>
<comment type="subunit">
    <text evidence="1 6">Interacts with ILK, ARHGEF6, PXN (via LD motifs), ACTN2 and actin (By similarity). Interacts with DYSF.</text>
</comment>
<comment type="interaction">
    <interactant intactId="EBI-6914996">
        <id>Q9ES46</id>
    </interactant>
    <interactant intactId="EBI-642580">
        <id>Q9ES28</id>
        <label>Arhgef7</label>
    </interactant>
    <organismsDiffer>false</organismsDiffer>
    <experiments>2</experiments>
</comment>
<comment type="interaction">
    <interactant intactId="EBI-6914996">
        <id>Q9ES46</id>
    </interactant>
    <interactant intactId="EBI-21927513">
        <id>Q64691</id>
        <label>Capn3</label>
    </interactant>
    <organismsDiffer>false</organismsDiffer>
    <experiments>3</experiments>
</comment>
<comment type="interaction">
    <interactant intactId="EBI-6914996">
        <id>Q9ES46</id>
    </interactant>
    <interactant intactId="EBI-6690138">
        <id>O55222</id>
        <label>Ilk</label>
    </interactant>
    <organismsDiffer>false</organismsDiffer>
    <experiments>3</experiments>
</comment>
<comment type="subcellular location">
    <subcellularLocation>
        <location>Cell junction</location>
        <location>Focal adhesion</location>
    </subcellularLocation>
    <subcellularLocation>
        <location evidence="1">Cell membrane</location>
        <topology evidence="1">Peripheral membrane protein</topology>
        <orientation evidence="1">Cytoplasmic side</orientation>
    </subcellularLocation>
    <subcellularLocation>
        <location evidence="1">Cytoplasm</location>
        <location evidence="1">Cytoskeleton</location>
    </subcellularLocation>
    <subcellularLocation>
        <location evidence="1">Cell projection</location>
        <location evidence="1">Lamellipodium</location>
    </subcellularLocation>
    <subcellularLocation>
        <location evidence="1">Cytoplasm</location>
        <location evidence="1">Myofibril</location>
        <location evidence="1">Sarcomere</location>
    </subcellularLocation>
    <subcellularLocation>
        <location evidence="1">Cytoplasm</location>
        <location evidence="1">Myofibril</location>
        <location evidence="1">Sarcomere</location>
        <location evidence="1">Z line</location>
    </subcellularLocation>
    <text evidence="1">Constituent of focal adhesions. Detected at the tips of the leading edge of cells. Colocalizes with F-actin at the tips of lamellipodia (By similarity).</text>
</comment>
<comment type="tissue specificity">
    <text evidence="5">Expressed predominantly in heart and moderately in spleen, lung and skeletal muscle.</text>
</comment>
<comment type="PTM">
    <text evidence="1">Phosphorylated by ILK.</text>
</comment>
<comment type="similarity">
    <text evidence="7">Belongs to the parvin family.</text>
</comment>
<sequence>MSSAPPRSPTPRAPKMKKDESFLGKLGGTLARKKKTREVTDLQEEGKSAINSPMAPALVDIHPEDTQLEENEERTMIDPTSREDPKFKELVKVLLDWINDVLAEERIIVKQLEEDLYDGQVLQKLLEKLAHCKLNVAEVTQSEIGQKQKLQTVLEAVQDLLRPHGWPLRWNVDSIHGKNLVAILHLLVSLAMHFRAPIHLPEHVTVQVVVVRKREGLLHSSHISEELTTTTEIMMGRFERDAFDTLFDHAPDKLNLVKKSLITFVNKHLNKLNLEVTDLETQFADGVYLVLLLGLLEDYFVPLHNFYLTPDSFDQKVHNVAFAFELMLDGGLKKPKARPEDVVNLDLKSTLRVLYTLFTKYKDVE</sequence>
<name>PARVB_MOUSE</name>
<dbReference type="EMBL" id="AF237770">
    <property type="protein sequence ID" value="AAG27172.1"/>
    <property type="molecule type" value="mRNA"/>
</dbReference>
<dbReference type="CCDS" id="CCDS37167.1"/>
<dbReference type="RefSeq" id="NP_573395.1">
    <property type="nucleotide sequence ID" value="NM_133167.3"/>
</dbReference>
<dbReference type="SMR" id="Q9ES46"/>
<dbReference type="BioGRID" id="228403">
    <property type="interactions" value="2"/>
</dbReference>
<dbReference type="DIP" id="DIP-57659N"/>
<dbReference type="FunCoup" id="Q9ES46">
    <property type="interactions" value="224"/>
</dbReference>
<dbReference type="IntAct" id="Q9ES46">
    <property type="interactions" value="3"/>
</dbReference>
<dbReference type="MINT" id="Q9ES46"/>
<dbReference type="STRING" id="10090.ENSMUSP00000023072"/>
<dbReference type="GlyGen" id="Q9ES46">
    <property type="glycosylation" value="1 site, 1 O-linked glycan (1 site)"/>
</dbReference>
<dbReference type="iPTMnet" id="Q9ES46"/>
<dbReference type="PhosphoSitePlus" id="Q9ES46"/>
<dbReference type="jPOST" id="Q9ES46"/>
<dbReference type="PaxDb" id="10090-ENSMUSP00000023072"/>
<dbReference type="ProteomicsDB" id="294160"/>
<dbReference type="Pumba" id="Q9ES46"/>
<dbReference type="Antibodypedia" id="27615">
    <property type="antibodies" value="239 antibodies from 28 providers"/>
</dbReference>
<dbReference type="DNASU" id="170736"/>
<dbReference type="Ensembl" id="ENSMUST00000023072.7">
    <property type="protein sequence ID" value="ENSMUSP00000023072.7"/>
    <property type="gene ID" value="ENSMUSG00000022438.7"/>
</dbReference>
<dbReference type="GeneID" id="170736"/>
<dbReference type="KEGG" id="mmu:170736"/>
<dbReference type="UCSC" id="uc007xby.1">
    <property type="organism name" value="mouse"/>
</dbReference>
<dbReference type="AGR" id="MGI:2153063"/>
<dbReference type="CTD" id="29780"/>
<dbReference type="MGI" id="MGI:2153063">
    <property type="gene designation" value="Parvb"/>
</dbReference>
<dbReference type="VEuPathDB" id="HostDB:ENSMUSG00000022438"/>
<dbReference type="eggNOG" id="KOG3631">
    <property type="taxonomic scope" value="Eukaryota"/>
</dbReference>
<dbReference type="GeneTree" id="ENSGT00950000183194"/>
<dbReference type="HOGENOM" id="CLU_047624_2_0_1"/>
<dbReference type="InParanoid" id="Q9ES46"/>
<dbReference type="OMA" id="PHRMRKD"/>
<dbReference type="OrthoDB" id="2099265at2759"/>
<dbReference type="PhylomeDB" id="Q9ES46"/>
<dbReference type="TreeFam" id="TF314025"/>
<dbReference type="Reactome" id="R-MMU-446353">
    <property type="pathway name" value="Cell-extracellular matrix interactions"/>
</dbReference>
<dbReference type="Reactome" id="R-MMU-446388">
    <property type="pathway name" value="Regulation of cytoskeletal remodeling and cell spreading by IPP complex components"/>
</dbReference>
<dbReference type="BioGRID-ORCS" id="170736">
    <property type="hits" value="1 hit in 76 CRISPR screens"/>
</dbReference>
<dbReference type="ChiTaRS" id="Parvb">
    <property type="organism name" value="mouse"/>
</dbReference>
<dbReference type="PRO" id="PR:Q9ES46"/>
<dbReference type="Proteomes" id="UP000000589">
    <property type="component" value="Chromosome 15"/>
</dbReference>
<dbReference type="RNAct" id="Q9ES46">
    <property type="molecule type" value="protein"/>
</dbReference>
<dbReference type="Bgee" id="ENSMUSG00000022438">
    <property type="expression patterns" value="Expressed in blood and 205 other cell types or tissues"/>
</dbReference>
<dbReference type="ExpressionAtlas" id="Q9ES46">
    <property type="expression patterns" value="baseline and differential"/>
</dbReference>
<dbReference type="GO" id="GO:0015629">
    <property type="term" value="C:actin cytoskeleton"/>
    <property type="evidence" value="ECO:0007669"/>
    <property type="project" value="Ensembl"/>
</dbReference>
<dbReference type="GO" id="GO:0005925">
    <property type="term" value="C:focal adhesion"/>
    <property type="evidence" value="ECO:0000250"/>
    <property type="project" value="UniProtKB"/>
</dbReference>
<dbReference type="GO" id="GO:0030027">
    <property type="term" value="C:lamellipodium"/>
    <property type="evidence" value="ECO:0000250"/>
    <property type="project" value="UniProtKB"/>
</dbReference>
<dbReference type="GO" id="GO:0005886">
    <property type="term" value="C:plasma membrane"/>
    <property type="evidence" value="ECO:0007669"/>
    <property type="project" value="UniProtKB-SubCell"/>
</dbReference>
<dbReference type="GO" id="GO:0030018">
    <property type="term" value="C:Z disc"/>
    <property type="evidence" value="ECO:0007669"/>
    <property type="project" value="UniProtKB-SubCell"/>
</dbReference>
<dbReference type="GO" id="GO:0003779">
    <property type="term" value="F:actin binding"/>
    <property type="evidence" value="ECO:0007669"/>
    <property type="project" value="UniProtKB-KW"/>
</dbReference>
<dbReference type="GO" id="GO:0030036">
    <property type="term" value="P:actin cytoskeleton organization"/>
    <property type="evidence" value="ECO:0000250"/>
    <property type="project" value="UniProtKB"/>
</dbReference>
<dbReference type="GO" id="GO:0007155">
    <property type="term" value="P:cell adhesion"/>
    <property type="evidence" value="ECO:0007669"/>
    <property type="project" value="UniProtKB-KW"/>
</dbReference>
<dbReference type="GO" id="GO:0030031">
    <property type="term" value="P:cell projection assembly"/>
    <property type="evidence" value="ECO:0000250"/>
    <property type="project" value="UniProtKB"/>
</dbReference>
<dbReference type="GO" id="GO:0071963">
    <property type="term" value="P:establishment or maintenance of cell polarity regulating cell shape"/>
    <property type="evidence" value="ECO:0000250"/>
    <property type="project" value="UniProtKB"/>
</dbReference>
<dbReference type="GO" id="GO:0030032">
    <property type="term" value="P:lamellipodium assembly"/>
    <property type="evidence" value="ECO:0000250"/>
    <property type="project" value="UniProtKB"/>
</dbReference>
<dbReference type="CDD" id="cd21336">
    <property type="entry name" value="CH_PARVB_rpt1"/>
    <property type="match status" value="1"/>
</dbReference>
<dbReference type="FunFam" id="1.10.418.10:FF:000015">
    <property type="entry name" value="Parvin beta"/>
    <property type="match status" value="1"/>
</dbReference>
<dbReference type="FunFam" id="1.10.418.10:FF:000011">
    <property type="entry name" value="Parvin, beta"/>
    <property type="match status" value="1"/>
</dbReference>
<dbReference type="Gene3D" id="1.10.418.10">
    <property type="entry name" value="Calponin-like domain"/>
    <property type="match status" value="2"/>
</dbReference>
<dbReference type="InterPro" id="IPR001715">
    <property type="entry name" value="CH_dom"/>
</dbReference>
<dbReference type="InterPro" id="IPR036872">
    <property type="entry name" value="CH_dom_sf"/>
</dbReference>
<dbReference type="InterPro" id="IPR028433">
    <property type="entry name" value="Parvin"/>
</dbReference>
<dbReference type="PANTHER" id="PTHR12114:SF7">
    <property type="entry name" value="BETA-PARVIN"/>
    <property type="match status" value="1"/>
</dbReference>
<dbReference type="PANTHER" id="PTHR12114">
    <property type="entry name" value="PARVIN"/>
    <property type="match status" value="1"/>
</dbReference>
<dbReference type="Pfam" id="PF00307">
    <property type="entry name" value="CH"/>
    <property type="match status" value="2"/>
</dbReference>
<dbReference type="PIRSF" id="PIRSF039131">
    <property type="entry name" value="Parvin"/>
    <property type="match status" value="1"/>
</dbReference>
<dbReference type="SMART" id="SM00033">
    <property type="entry name" value="CH"/>
    <property type="match status" value="2"/>
</dbReference>
<dbReference type="SUPFAM" id="SSF47576">
    <property type="entry name" value="Calponin-homology domain, CH-domain"/>
    <property type="match status" value="1"/>
</dbReference>
<dbReference type="PROSITE" id="PS50021">
    <property type="entry name" value="CH"/>
    <property type="match status" value="2"/>
</dbReference>
<evidence type="ECO:0000250" key="1"/>
<evidence type="ECO:0000250" key="2">
    <source>
        <dbReference type="UniProtKB" id="Q9HBI1"/>
    </source>
</evidence>
<evidence type="ECO:0000255" key="3">
    <source>
        <dbReference type="PROSITE-ProRule" id="PRU00044"/>
    </source>
</evidence>
<evidence type="ECO:0000256" key="4">
    <source>
        <dbReference type="SAM" id="MobiDB-lite"/>
    </source>
</evidence>
<evidence type="ECO:0000269" key="5">
    <source>
    </source>
</evidence>
<evidence type="ECO:0000269" key="6">
    <source>
    </source>
</evidence>
<evidence type="ECO:0000305" key="7"/>
<proteinExistence type="evidence at protein level"/>
<reference key="1">
    <citation type="journal article" date="2001" name="J. Cell Sci.">
        <title>Parvin, a 42 kDa focal adhesion protein, related to the alpha-actinin superfamily.</title>
        <authorList>
            <person name="Olski T.M."/>
            <person name="Noegel A.A."/>
            <person name="Korenbaum E."/>
        </authorList>
    </citation>
    <scope>NUCLEOTIDE SEQUENCE [MRNA]</scope>
</reference>
<reference key="2">
    <citation type="journal article" date="2001" name="Gene">
        <title>Genomic organization and expression profile of the parvin family of focal adhesion proteins in mice and humans.</title>
        <authorList>
            <person name="Korenbaum E."/>
            <person name="Olski T.M."/>
            <person name="Noegel A.A."/>
        </authorList>
    </citation>
    <scope>TISSUE SPECIFICITY</scope>
</reference>
<reference key="3">
    <citation type="journal article" date="2005" name="J. Neuropathol. Exp. Neurol.">
        <title>Dysferlin interacts with affixin (beta-parvin) at the sarcolemma.</title>
        <authorList>
            <person name="Matsuda C."/>
            <person name="Kameyama K."/>
            <person name="Tagawa K."/>
            <person name="Ogawa M."/>
            <person name="Suzuki A."/>
            <person name="Yamaji S."/>
            <person name="Okamoto H."/>
            <person name="Nishino I."/>
            <person name="Hayashi Y.K."/>
        </authorList>
    </citation>
    <scope>INTERACTION WITH DYSF</scope>
</reference>
<reference key="4">
    <citation type="journal article" date="2010" name="Cell">
        <title>A tissue-specific atlas of mouse protein phosphorylation and expression.</title>
        <authorList>
            <person name="Huttlin E.L."/>
            <person name="Jedrychowski M.P."/>
            <person name="Elias J.E."/>
            <person name="Goswami T."/>
            <person name="Rad R."/>
            <person name="Beausoleil S.A."/>
            <person name="Villen J."/>
            <person name="Haas W."/>
            <person name="Sowa M.E."/>
            <person name="Gygi S.P."/>
        </authorList>
    </citation>
    <scope>IDENTIFICATION BY MASS SPECTROMETRY [LARGE SCALE ANALYSIS]</scope>
    <source>
        <tissue>Brown adipose tissue</tissue>
        <tissue>Heart</tissue>
        <tissue>Kidney</tissue>
        <tissue>Lung</tissue>
        <tissue>Spleen</tissue>
        <tissue>Testis</tissue>
    </source>
</reference>
<keyword id="KW-0009">Actin-binding</keyword>
<keyword id="KW-0130">Cell adhesion</keyword>
<keyword id="KW-0965">Cell junction</keyword>
<keyword id="KW-1003">Cell membrane</keyword>
<keyword id="KW-0966">Cell projection</keyword>
<keyword id="KW-0963">Cytoplasm</keyword>
<keyword id="KW-0206">Cytoskeleton</keyword>
<keyword id="KW-0472">Membrane</keyword>
<keyword id="KW-0597">Phosphoprotein</keyword>
<keyword id="KW-1185">Reference proteome</keyword>
<keyword id="KW-0677">Repeat</keyword>
<feature type="chain" id="PRO_0000121584" description="Beta-parvin">
    <location>
        <begin position="1"/>
        <end position="365"/>
    </location>
</feature>
<feature type="domain" description="Calponin-homology (CH) 1" evidence="3">
    <location>
        <begin position="88"/>
        <end position="195"/>
    </location>
</feature>
<feature type="domain" description="Calponin-homology (CH) 2" evidence="3">
    <location>
        <begin position="255"/>
        <end position="362"/>
    </location>
</feature>
<feature type="region of interest" description="Disordered" evidence="4">
    <location>
        <begin position="1"/>
        <end position="52"/>
    </location>
</feature>
<feature type="compositionally biased region" description="Pro residues" evidence="4">
    <location>
        <begin position="1"/>
        <end position="12"/>
    </location>
</feature>
<feature type="compositionally biased region" description="Basic and acidic residues" evidence="4">
    <location>
        <begin position="37"/>
        <end position="47"/>
    </location>
</feature>
<feature type="modified residue" description="Phosphoserine" evidence="2">
    <location>
        <position position="8"/>
    </location>
</feature>
<accession>Q9ES46</accession>
<protein>
    <recommendedName>
        <fullName>Beta-parvin</fullName>
    </recommendedName>
</protein>